<accession>B2RYW8</accession>
<feature type="initiator methionine" description="Removed" evidence="1">
    <location>
        <position position="1"/>
    </location>
</feature>
<feature type="chain" id="PRO_0000415958" description="MICOS complex subunit Mic10">
    <location>
        <begin position="2"/>
        <end position="76"/>
    </location>
</feature>
<feature type="transmembrane region" description="Helical" evidence="2">
    <location>
        <begin position="17"/>
        <end position="36"/>
    </location>
</feature>
<feature type="topological domain" description="Mitochondrial intermembrane" evidence="2">
    <location>
        <begin position="37"/>
        <end position="76"/>
    </location>
</feature>
<feature type="modified residue" description="N-acetylserine" evidence="1">
    <location>
        <position position="2"/>
    </location>
</feature>
<dbReference type="EMBL" id="BC166932">
    <property type="protein sequence ID" value="AAI66932.1"/>
    <property type="molecule type" value="mRNA"/>
</dbReference>
<dbReference type="RefSeq" id="NP_001167027.1">
    <property type="nucleotide sequence ID" value="NM_001173556.1"/>
</dbReference>
<dbReference type="FunCoup" id="B2RYW8">
    <property type="interactions" value="453"/>
</dbReference>
<dbReference type="STRING" id="10116.ENSRNOP00000060661"/>
<dbReference type="PhosphoSitePlus" id="B2RYW8"/>
<dbReference type="PaxDb" id="10116-ENSRNOP00000060661"/>
<dbReference type="PeptideAtlas" id="B2RYW8"/>
<dbReference type="GeneID" id="362641"/>
<dbReference type="KEGG" id="rno:362641"/>
<dbReference type="AGR" id="RGD:1560187"/>
<dbReference type="CTD" id="440574"/>
<dbReference type="RGD" id="1560187">
    <property type="gene designation" value="Micos10"/>
</dbReference>
<dbReference type="eggNOG" id="KOG4604">
    <property type="taxonomic scope" value="Eukaryota"/>
</dbReference>
<dbReference type="HOGENOM" id="CLU_068905_2_1_1"/>
<dbReference type="InParanoid" id="B2RYW8"/>
<dbReference type="OrthoDB" id="1916310at2759"/>
<dbReference type="PhylomeDB" id="B2RYW8"/>
<dbReference type="TreeFam" id="TF300259"/>
<dbReference type="PRO" id="PR:B2RYW8"/>
<dbReference type="Proteomes" id="UP000002494">
    <property type="component" value="Chromosome 5"/>
</dbReference>
<dbReference type="Bgee" id="ENSRNOG00000042696">
    <property type="expression patterns" value="Expressed in quadriceps femoris and 20 other cell types or tissues"/>
</dbReference>
<dbReference type="GO" id="GO:0061617">
    <property type="term" value="C:MICOS complex"/>
    <property type="evidence" value="ECO:0007669"/>
    <property type="project" value="InterPro"/>
</dbReference>
<dbReference type="GO" id="GO:0005739">
    <property type="term" value="C:mitochondrion"/>
    <property type="evidence" value="ECO:0000318"/>
    <property type="project" value="GO_Central"/>
</dbReference>
<dbReference type="GO" id="GO:0042407">
    <property type="term" value="P:cristae formation"/>
    <property type="evidence" value="ECO:0000266"/>
    <property type="project" value="RGD"/>
</dbReference>
<dbReference type="InterPro" id="IPR007512">
    <property type="entry name" value="Mic10"/>
</dbReference>
<dbReference type="PANTHER" id="PTHR21304">
    <property type="entry name" value="MICOS COMPLEX SUBUNIT MIC10"/>
    <property type="match status" value="1"/>
</dbReference>
<dbReference type="PANTHER" id="PTHR21304:SF0">
    <property type="entry name" value="MICOS COMPLEX SUBUNIT MIC10"/>
    <property type="match status" value="1"/>
</dbReference>
<dbReference type="Pfam" id="PF04418">
    <property type="entry name" value="DUF543"/>
    <property type="match status" value="1"/>
</dbReference>
<comment type="function">
    <text evidence="1">Component of the MICOS complex, a large protein complex of the mitochondrial inner membrane that plays crucial roles in the maintenance of crista junctions, inner membrane architecture, and formation of contact sites to the outer membrane.</text>
</comment>
<comment type="subunit">
    <text evidence="1">Component of the mitochondrial contact site and cristae organizing system (MICOS) complex, composed of at least MICOS10/MIC10, CHCHD3/MIC19, CHCHD6/MIC25, APOOL/MIC27, IMMT/MIC60, APOO/MIC23/MIC26 and MICOS13/MIC13 (By similarity). This complex was also known under the names MINOS or MitOS complex (By similarity). The MICOS complex associates with mitochondrial outer membrane proteins SAMM50, MTX1 and MTX2 (together described as components of the mitochondrial outer membrane sorting assembly machinery (SAM) complex) and DNAJC11, mitochondrial inner membrane protein TMEM11 and with HSPA9 (By similarity). The MICOS and SAM complexes together with DNAJC11 are part of a large protein complex spanning both membranes termed the mitochondrial intermembrane space bridging (MIB) complex. Interacts with IMMT/MIC60 and MICOS13/MIC13 (By similarity). Interacts with APOO/MIC23/MIC26 and APOOL/MIC27 (By similarity). Interacts with ARMC1 (By similarity).</text>
</comment>
<comment type="subcellular location">
    <subcellularLocation>
        <location evidence="1">Mitochondrion inner membrane</location>
        <topology evidence="1">Single-pass membrane protein</topology>
    </subcellularLocation>
    <text evidence="1">The C-terminus is located in the intermembrane space, while the location of the N-terminus has not been determined yet. As some programs predict the presence of 2 closely apposed membrane domains, it has been proposed that the protein may cross the membrane twice and that both termini may face the intermembrane space.</text>
</comment>
<comment type="similarity">
    <text evidence="3">Belongs to the MICOS complex subunit Mic10 family.</text>
</comment>
<name>MIC10_RAT</name>
<reference key="1">
    <citation type="journal article" date="2004" name="Genome Res.">
        <title>The status, quality, and expansion of the NIH full-length cDNA project: the Mammalian Gene Collection (MGC).</title>
        <authorList>
            <consortium name="The MGC Project Team"/>
        </authorList>
    </citation>
    <scope>NUCLEOTIDE SEQUENCE [LARGE SCALE MRNA]</scope>
    <source>
        <tissue>Pituitary anterior lobe</tissue>
    </source>
</reference>
<organism>
    <name type="scientific">Rattus norvegicus</name>
    <name type="common">Rat</name>
    <dbReference type="NCBI Taxonomy" id="10116"/>
    <lineage>
        <taxon>Eukaryota</taxon>
        <taxon>Metazoa</taxon>
        <taxon>Chordata</taxon>
        <taxon>Craniata</taxon>
        <taxon>Vertebrata</taxon>
        <taxon>Euteleostomi</taxon>
        <taxon>Mammalia</taxon>
        <taxon>Eutheria</taxon>
        <taxon>Euarchontoglires</taxon>
        <taxon>Glires</taxon>
        <taxon>Rodentia</taxon>
        <taxon>Myomorpha</taxon>
        <taxon>Muroidea</taxon>
        <taxon>Muridae</taxon>
        <taxon>Murinae</taxon>
        <taxon>Rattus</taxon>
    </lineage>
</organism>
<gene>
    <name evidence="4" type="primary">Micos10</name>
    <name type="synonym">Mic10</name>
    <name evidence="4" type="synonym">Minos1</name>
</gene>
<sequence length="76" mass="8550">MSESEPGRKWDRCMADALVKLGTGFGLGMVFSLTFFKRRKWPLAFGSGVGLGMAYSNCQHDFQAPYLLHGKYVKEQ</sequence>
<protein>
    <recommendedName>
        <fullName evidence="3">MICOS complex subunit Mic10</fullName>
    </recommendedName>
    <alternativeName>
        <fullName>Mitochondrial inner membrane organizing system protein 1</fullName>
    </alternativeName>
</protein>
<evidence type="ECO:0000250" key="1">
    <source>
        <dbReference type="UniProtKB" id="Q5TGZ0"/>
    </source>
</evidence>
<evidence type="ECO:0000255" key="2"/>
<evidence type="ECO:0000305" key="3"/>
<evidence type="ECO:0000312" key="4">
    <source>
        <dbReference type="RGD" id="1560187"/>
    </source>
</evidence>
<keyword id="KW-0007">Acetylation</keyword>
<keyword id="KW-0472">Membrane</keyword>
<keyword id="KW-0496">Mitochondrion</keyword>
<keyword id="KW-0999">Mitochondrion inner membrane</keyword>
<keyword id="KW-1185">Reference proteome</keyword>
<keyword id="KW-0812">Transmembrane</keyword>
<keyword id="KW-1133">Transmembrane helix</keyword>
<proteinExistence type="inferred from homology"/>